<proteinExistence type="inferred from homology"/>
<protein>
    <recommendedName>
        <fullName evidence="1">Holo-[acyl-carrier-protein] synthase</fullName>
        <shortName evidence="1">Holo-ACP synthase</shortName>
        <ecNumber evidence="1">2.7.8.7</ecNumber>
    </recommendedName>
    <alternativeName>
        <fullName evidence="1">4'-phosphopantetheinyl transferase AcpS</fullName>
    </alternativeName>
</protein>
<name>ACPS_CLAM3</name>
<gene>
    <name evidence="1" type="primary">acpS</name>
    <name type="ordered locus">CMM_2575</name>
</gene>
<comment type="function">
    <text evidence="1">Transfers the 4'-phosphopantetheine moiety from coenzyme A to a Ser of acyl-carrier-protein.</text>
</comment>
<comment type="catalytic activity">
    <reaction evidence="1">
        <text>apo-[ACP] + CoA = holo-[ACP] + adenosine 3',5'-bisphosphate + H(+)</text>
        <dbReference type="Rhea" id="RHEA:12068"/>
        <dbReference type="Rhea" id="RHEA-COMP:9685"/>
        <dbReference type="Rhea" id="RHEA-COMP:9690"/>
        <dbReference type="ChEBI" id="CHEBI:15378"/>
        <dbReference type="ChEBI" id="CHEBI:29999"/>
        <dbReference type="ChEBI" id="CHEBI:57287"/>
        <dbReference type="ChEBI" id="CHEBI:58343"/>
        <dbReference type="ChEBI" id="CHEBI:64479"/>
        <dbReference type="EC" id="2.7.8.7"/>
    </reaction>
</comment>
<comment type="cofactor">
    <cofactor evidence="1">
        <name>Mg(2+)</name>
        <dbReference type="ChEBI" id="CHEBI:18420"/>
    </cofactor>
</comment>
<comment type="subcellular location">
    <subcellularLocation>
        <location evidence="1">Cytoplasm</location>
    </subcellularLocation>
</comment>
<comment type="similarity">
    <text evidence="1">Belongs to the P-Pant transferase superfamily. AcpS family.</text>
</comment>
<organism>
    <name type="scientific">Clavibacter michiganensis subsp. michiganensis (strain NCPPB 382)</name>
    <dbReference type="NCBI Taxonomy" id="443906"/>
    <lineage>
        <taxon>Bacteria</taxon>
        <taxon>Bacillati</taxon>
        <taxon>Actinomycetota</taxon>
        <taxon>Actinomycetes</taxon>
        <taxon>Micrococcales</taxon>
        <taxon>Microbacteriaceae</taxon>
        <taxon>Clavibacter</taxon>
    </lineage>
</organism>
<sequence>MIRGIGVDVVDVARFARSAERTPGLVPRLFAPAERSLPARSLAARFAAKEALIKALGGPGGISWQDMEVVRDEHGDPSFRVAGVVAQVAAARGVTRIHLSMSHDAGLATAFVVTEGDAP</sequence>
<reference key="1">
    <citation type="journal article" date="2008" name="J. Bacteriol.">
        <title>The genome sequence of the tomato-pathogenic actinomycete Clavibacter michiganensis subsp. michiganensis NCPPB382 reveals a large island involved in pathogenicity.</title>
        <authorList>
            <person name="Gartemann K.-H."/>
            <person name="Abt B."/>
            <person name="Bekel T."/>
            <person name="Burger A."/>
            <person name="Engemann J."/>
            <person name="Fluegel M."/>
            <person name="Gaigalat L."/>
            <person name="Goesmann A."/>
            <person name="Graefen I."/>
            <person name="Kalinowski J."/>
            <person name="Kaup O."/>
            <person name="Kirchner O."/>
            <person name="Krause L."/>
            <person name="Linke B."/>
            <person name="McHardy A."/>
            <person name="Meyer F."/>
            <person name="Pohle S."/>
            <person name="Rueckert C."/>
            <person name="Schneiker S."/>
            <person name="Zellermann E.-M."/>
            <person name="Puehler A."/>
            <person name="Eichenlaub R."/>
            <person name="Kaiser O."/>
            <person name="Bartels D."/>
        </authorList>
    </citation>
    <scope>NUCLEOTIDE SEQUENCE [LARGE SCALE GENOMIC DNA]</scope>
    <source>
        <strain>NCPPB 382</strain>
    </source>
</reference>
<evidence type="ECO:0000255" key="1">
    <source>
        <dbReference type="HAMAP-Rule" id="MF_00101"/>
    </source>
</evidence>
<dbReference type="EC" id="2.7.8.7" evidence="1"/>
<dbReference type="EMBL" id="AM711867">
    <property type="protein sequence ID" value="CAN02658.1"/>
    <property type="molecule type" value="Genomic_DNA"/>
</dbReference>
<dbReference type="RefSeq" id="WP_012039264.1">
    <property type="nucleotide sequence ID" value="NC_009480.1"/>
</dbReference>
<dbReference type="SMR" id="A5CU72"/>
<dbReference type="KEGG" id="cmi:CMM_2575"/>
<dbReference type="eggNOG" id="COG0736">
    <property type="taxonomic scope" value="Bacteria"/>
</dbReference>
<dbReference type="HOGENOM" id="CLU_089696_0_0_11"/>
<dbReference type="OrthoDB" id="517356at2"/>
<dbReference type="Proteomes" id="UP000001564">
    <property type="component" value="Chromosome"/>
</dbReference>
<dbReference type="GO" id="GO:0005737">
    <property type="term" value="C:cytoplasm"/>
    <property type="evidence" value="ECO:0007669"/>
    <property type="project" value="UniProtKB-SubCell"/>
</dbReference>
<dbReference type="GO" id="GO:0008897">
    <property type="term" value="F:holo-[acyl-carrier-protein] synthase activity"/>
    <property type="evidence" value="ECO:0007669"/>
    <property type="project" value="UniProtKB-UniRule"/>
</dbReference>
<dbReference type="GO" id="GO:0000287">
    <property type="term" value="F:magnesium ion binding"/>
    <property type="evidence" value="ECO:0007669"/>
    <property type="project" value="UniProtKB-UniRule"/>
</dbReference>
<dbReference type="GO" id="GO:0006633">
    <property type="term" value="P:fatty acid biosynthetic process"/>
    <property type="evidence" value="ECO:0007669"/>
    <property type="project" value="UniProtKB-UniRule"/>
</dbReference>
<dbReference type="Gene3D" id="3.90.470.20">
    <property type="entry name" value="4'-phosphopantetheinyl transferase domain"/>
    <property type="match status" value="1"/>
</dbReference>
<dbReference type="HAMAP" id="MF_00101">
    <property type="entry name" value="AcpS"/>
    <property type="match status" value="1"/>
</dbReference>
<dbReference type="InterPro" id="IPR008278">
    <property type="entry name" value="4-PPantetheinyl_Trfase_dom"/>
</dbReference>
<dbReference type="InterPro" id="IPR037143">
    <property type="entry name" value="4-PPantetheinyl_Trfase_dom_sf"/>
</dbReference>
<dbReference type="InterPro" id="IPR002582">
    <property type="entry name" value="ACPS"/>
</dbReference>
<dbReference type="InterPro" id="IPR004568">
    <property type="entry name" value="Ppantetheine-prot_Trfase_dom"/>
</dbReference>
<dbReference type="NCBIfam" id="TIGR00516">
    <property type="entry name" value="acpS"/>
    <property type="match status" value="1"/>
</dbReference>
<dbReference type="NCBIfam" id="TIGR00556">
    <property type="entry name" value="pantethn_trn"/>
    <property type="match status" value="1"/>
</dbReference>
<dbReference type="NCBIfam" id="NF000832">
    <property type="entry name" value="PRK00070.3-2"/>
    <property type="match status" value="1"/>
</dbReference>
<dbReference type="Pfam" id="PF01648">
    <property type="entry name" value="ACPS"/>
    <property type="match status" value="1"/>
</dbReference>
<dbReference type="SUPFAM" id="SSF56214">
    <property type="entry name" value="4'-phosphopantetheinyl transferase"/>
    <property type="match status" value="1"/>
</dbReference>
<feature type="chain" id="PRO_1000008413" description="Holo-[acyl-carrier-protein] synthase">
    <location>
        <begin position="1"/>
        <end position="119"/>
    </location>
</feature>
<feature type="binding site" evidence="1">
    <location>
        <position position="8"/>
    </location>
    <ligand>
        <name>Mg(2+)</name>
        <dbReference type="ChEBI" id="CHEBI:18420"/>
    </ligand>
</feature>
<feature type="binding site" evidence="1">
    <location>
        <position position="50"/>
    </location>
    <ligand>
        <name>Mg(2+)</name>
        <dbReference type="ChEBI" id="CHEBI:18420"/>
    </ligand>
</feature>
<keyword id="KW-0963">Cytoplasm</keyword>
<keyword id="KW-0275">Fatty acid biosynthesis</keyword>
<keyword id="KW-0276">Fatty acid metabolism</keyword>
<keyword id="KW-0444">Lipid biosynthesis</keyword>
<keyword id="KW-0443">Lipid metabolism</keyword>
<keyword id="KW-0460">Magnesium</keyword>
<keyword id="KW-0479">Metal-binding</keyword>
<keyword id="KW-0808">Transferase</keyword>
<accession>A5CU72</accession>